<evidence type="ECO:0000250" key="1"/>
<evidence type="ECO:0000255" key="2"/>
<evidence type="ECO:0000305" key="3"/>
<gene>
    <name type="primary">mnhC2</name>
    <name type="synonym">mrpC2</name>
    <name type="ordered locus">SAHV_0621</name>
</gene>
<sequence length="114" mass="12496">MNLILLLVIGFLVFIGTYMILSINLIRIVIGISIYTHAGNLIIMSMGTYGSSRSEPLITGGNQLFVDPLLQAIVLTAIVIGFGMTAFLLVLVYRTYKVTKEDEIEGLRGEDDAK</sequence>
<protein>
    <recommendedName>
        <fullName>Putative antiporter subunit mnhC2</fullName>
    </recommendedName>
    <alternativeName>
        <fullName>Mrp complex subunit C2</fullName>
    </alternativeName>
    <alternativeName>
        <fullName>Putative NADH-ubiquinone oxidoreductase subunit mnhC2</fullName>
    </alternativeName>
</protein>
<dbReference type="EMBL" id="AP009324">
    <property type="protein sequence ID" value="BAF77504.1"/>
    <property type="molecule type" value="Genomic_DNA"/>
</dbReference>
<dbReference type="RefSeq" id="WP_001048985.1">
    <property type="nucleotide sequence ID" value="NZ_CTYB01000002.1"/>
</dbReference>
<dbReference type="SMR" id="A7WZ78"/>
<dbReference type="KEGG" id="saw:SAHV_0621"/>
<dbReference type="HOGENOM" id="CLU_082058_3_1_9"/>
<dbReference type="GO" id="GO:0005886">
    <property type="term" value="C:plasma membrane"/>
    <property type="evidence" value="ECO:0007669"/>
    <property type="project" value="UniProtKB-SubCell"/>
</dbReference>
<dbReference type="GO" id="GO:0015297">
    <property type="term" value="F:antiporter activity"/>
    <property type="evidence" value="ECO:0007669"/>
    <property type="project" value="UniProtKB-KW"/>
</dbReference>
<dbReference type="GO" id="GO:0006811">
    <property type="term" value="P:monoatomic ion transport"/>
    <property type="evidence" value="ECO:0007669"/>
    <property type="project" value="UniProtKB-KW"/>
</dbReference>
<dbReference type="Gene3D" id="1.10.287.3510">
    <property type="match status" value="1"/>
</dbReference>
<dbReference type="InterPro" id="IPR050601">
    <property type="entry name" value="CPA3_antiporter_subunitC"/>
</dbReference>
<dbReference type="InterPro" id="IPR039428">
    <property type="entry name" value="NUOK/Mnh_C1-like"/>
</dbReference>
<dbReference type="NCBIfam" id="NF009303">
    <property type="entry name" value="PRK12660.1"/>
    <property type="match status" value="1"/>
</dbReference>
<dbReference type="PANTHER" id="PTHR34583">
    <property type="entry name" value="ANTIPORTER SUBUNIT MNHC2-RELATED"/>
    <property type="match status" value="1"/>
</dbReference>
<dbReference type="PANTHER" id="PTHR34583:SF2">
    <property type="entry name" value="ANTIPORTER SUBUNIT MNHC2-RELATED"/>
    <property type="match status" value="1"/>
</dbReference>
<dbReference type="Pfam" id="PF00420">
    <property type="entry name" value="Oxidored_q2"/>
    <property type="match status" value="1"/>
</dbReference>
<proteinExistence type="inferred from homology"/>
<keyword id="KW-0050">Antiport</keyword>
<keyword id="KW-1003">Cell membrane</keyword>
<keyword id="KW-0406">Ion transport</keyword>
<keyword id="KW-0472">Membrane</keyword>
<keyword id="KW-0812">Transmembrane</keyword>
<keyword id="KW-1133">Transmembrane helix</keyword>
<keyword id="KW-0813">Transport</keyword>
<feature type="chain" id="PRO_0000372254" description="Putative antiporter subunit mnhC2">
    <location>
        <begin position="1"/>
        <end position="114"/>
    </location>
</feature>
<feature type="transmembrane region" description="Helical" evidence="2">
    <location>
        <begin position="3"/>
        <end position="23"/>
    </location>
</feature>
<feature type="transmembrane region" description="Helical" evidence="2">
    <location>
        <begin position="28"/>
        <end position="48"/>
    </location>
</feature>
<feature type="transmembrane region" description="Helical" evidence="2">
    <location>
        <begin position="72"/>
        <end position="92"/>
    </location>
</feature>
<accession>A7WZ78</accession>
<organism>
    <name type="scientific">Staphylococcus aureus (strain Mu3 / ATCC 700698)</name>
    <dbReference type="NCBI Taxonomy" id="418127"/>
    <lineage>
        <taxon>Bacteria</taxon>
        <taxon>Bacillati</taxon>
        <taxon>Bacillota</taxon>
        <taxon>Bacilli</taxon>
        <taxon>Bacillales</taxon>
        <taxon>Staphylococcaceae</taxon>
        <taxon>Staphylococcus</taxon>
    </lineage>
</organism>
<comment type="subunit">
    <text evidence="1">May form a heterooligomeric complex that consists of seven subunits: mnhA2, mnhB2, mnhC2, mnhD2, mnhE2, mnhF2 and mnhG2.</text>
</comment>
<comment type="subcellular location">
    <subcellularLocation>
        <location evidence="3">Cell membrane</location>
        <topology evidence="3">Multi-pass membrane protein</topology>
    </subcellularLocation>
</comment>
<comment type="similarity">
    <text evidence="3">Belongs to the CPA3 antiporters (TC 2.A.63) subunit C family.</text>
</comment>
<name>MNHC2_STAA1</name>
<reference key="1">
    <citation type="journal article" date="2008" name="Antimicrob. Agents Chemother.">
        <title>Mutated response regulator graR is responsible for phenotypic conversion of Staphylococcus aureus from heterogeneous vancomycin-intermediate resistance to vancomycin-intermediate resistance.</title>
        <authorList>
            <person name="Neoh H.-M."/>
            <person name="Cui L."/>
            <person name="Yuzawa H."/>
            <person name="Takeuchi F."/>
            <person name="Matsuo M."/>
            <person name="Hiramatsu K."/>
        </authorList>
    </citation>
    <scope>NUCLEOTIDE SEQUENCE [LARGE SCALE GENOMIC DNA]</scope>
    <source>
        <strain>Mu3 / ATCC 700698</strain>
    </source>
</reference>